<evidence type="ECO:0000250" key="1">
    <source>
        <dbReference type="UniProtKB" id="Q8VC04"/>
    </source>
</evidence>
<evidence type="ECO:0000255" key="2"/>
<evidence type="ECO:0000269" key="3">
    <source>
    </source>
</evidence>
<evidence type="ECO:0000269" key="4">
    <source>
    </source>
</evidence>
<evidence type="ECO:0000303" key="5">
    <source>
    </source>
</evidence>
<evidence type="ECO:0000305" key="6"/>
<name>T106A_HUMAN</name>
<sequence length="262" mass="28920">MGKTFSQLGSWREDENKSILSSKPAIGSKAVNYSSTGSSKSFCSCVPCEGTADASFVTCPTCQGSGKIPQELEKQLVALIPYGDQRLKPKHTKLFVFLAVLICLVTSSFIVFFLFPRSVIVQPAGLNSSTVAFDEADIYLNITNILNISNGNYYPIMVTQLTLEVLHLSLVVGQVSNNLLLHIGPLASEQMFYAVATKIRDENTYKICTWLEIKVHHVLLHIQGTLTCSYLSHSEQLVFQSYEYVDCRGNASVPHQLTPHPP</sequence>
<proteinExistence type="evidence at protein level"/>
<accession>Q96A25</accession>
<accession>A8K2X2</accession>
<accession>B7Z698</accession>
<dbReference type="EMBL" id="AK056132">
    <property type="protein sequence ID" value="BAB71101.1"/>
    <property type="molecule type" value="mRNA"/>
</dbReference>
<dbReference type="EMBL" id="AK290387">
    <property type="protein sequence ID" value="BAF83076.1"/>
    <property type="molecule type" value="mRNA"/>
</dbReference>
<dbReference type="EMBL" id="AK299974">
    <property type="protein sequence ID" value="BAH13184.1"/>
    <property type="molecule type" value="mRNA"/>
</dbReference>
<dbReference type="EMBL" id="BC012139">
    <property type="protein sequence ID" value="AAH12139.1"/>
    <property type="molecule type" value="mRNA"/>
</dbReference>
<dbReference type="EMBL" id="BC146974">
    <property type="protein sequence ID" value="AAI46975.1"/>
    <property type="molecule type" value="mRNA"/>
</dbReference>
<dbReference type="EMBL" id="BC146976">
    <property type="protein sequence ID" value="AAI46977.1"/>
    <property type="molecule type" value="mRNA"/>
</dbReference>
<dbReference type="EMBL" id="BC147023">
    <property type="protein sequence ID" value="AAI47024.1"/>
    <property type="molecule type" value="mRNA"/>
</dbReference>
<dbReference type="EMBL" id="AC087365">
    <property type="status" value="NOT_ANNOTATED_CDS"/>
    <property type="molecule type" value="Genomic_DNA"/>
</dbReference>
<dbReference type="EMBL" id="AC109326">
    <property type="status" value="NOT_ANNOTATED_CDS"/>
    <property type="molecule type" value="Genomic_DNA"/>
</dbReference>
<dbReference type="EMBL" id="CH471152">
    <property type="protein sequence ID" value="EAW60954.1"/>
    <property type="molecule type" value="Genomic_DNA"/>
</dbReference>
<dbReference type="EMBL" id="BC157892">
    <property type="protein sequence ID" value="AAI57893.1"/>
    <property type="molecule type" value="mRNA"/>
</dbReference>
<dbReference type="CCDS" id="CCDS11462.1">
    <molecule id="Q96A25-1"/>
</dbReference>
<dbReference type="CCDS" id="CCDS74073.1">
    <molecule id="Q96A25-2"/>
</dbReference>
<dbReference type="RefSeq" id="NP_001278515.1">
    <molecule id="Q96A25-1"/>
    <property type="nucleotide sequence ID" value="NM_001291586.2"/>
</dbReference>
<dbReference type="RefSeq" id="NP_001278516.1">
    <molecule id="Q96A25-2"/>
    <property type="nucleotide sequence ID" value="NM_001291587.2"/>
</dbReference>
<dbReference type="RefSeq" id="NP_659478.1">
    <molecule id="Q96A25-1"/>
    <property type="nucleotide sequence ID" value="NM_145041.4"/>
</dbReference>
<dbReference type="RefSeq" id="XP_006721721.1">
    <property type="nucleotide sequence ID" value="XM_006721658.2"/>
</dbReference>
<dbReference type="RefSeq" id="XP_006721722.1">
    <property type="nucleotide sequence ID" value="XM_006721659.3"/>
</dbReference>
<dbReference type="RefSeq" id="XP_016879603.1">
    <property type="nucleotide sequence ID" value="XM_017024114.1"/>
</dbReference>
<dbReference type="BioGRID" id="125240">
    <property type="interactions" value="242"/>
</dbReference>
<dbReference type="FunCoup" id="Q96A25">
    <property type="interactions" value="384"/>
</dbReference>
<dbReference type="IntAct" id="Q96A25">
    <property type="interactions" value="211"/>
</dbReference>
<dbReference type="STRING" id="9606.ENSP00000483246"/>
<dbReference type="TCDB" id="9.B.23.1.5">
    <property type="family name" value="the tmem106 (tmem106) family"/>
</dbReference>
<dbReference type="iPTMnet" id="Q96A25"/>
<dbReference type="PhosphoSitePlus" id="Q96A25"/>
<dbReference type="BioMuta" id="TMEM106A"/>
<dbReference type="DMDM" id="74731081"/>
<dbReference type="jPOST" id="Q96A25"/>
<dbReference type="MassIVE" id="Q96A25"/>
<dbReference type="PaxDb" id="9606-ENSP00000483246"/>
<dbReference type="PeptideAtlas" id="Q96A25"/>
<dbReference type="ProteomicsDB" id="6760"/>
<dbReference type="ProteomicsDB" id="75896">
    <molecule id="Q96A25-1"/>
</dbReference>
<dbReference type="Antibodypedia" id="61733">
    <property type="antibodies" value="57 antibodies from 18 providers"/>
</dbReference>
<dbReference type="DNASU" id="113277"/>
<dbReference type="Ensembl" id="ENST00000541594.5">
    <molecule id="Q96A25-2"/>
    <property type="protein sequence ID" value="ENSP00000439844.1"/>
    <property type="gene ID" value="ENSG00000184988.8"/>
</dbReference>
<dbReference type="Ensembl" id="ENST00000588659.5">
    <molecule id="Q96A25-1"/>
    <property type="protein sequence ID" value="ENSP00000466820.1"/>
    <property type="gene ID" value="ENSG00000184988.8"/>
</dbReference>
<dbReference type="Ensembl" id="ENST00000612339.4">
    <molecule id="Q96A25-1"/>
    <property type="protein sequence ID" value="ENSP00000483246.1"/>
    <property type="gene ID" value="ENSG00000184988.8"/>
</dbReference>
<dbReference type="GeneID" id="113277"/>
<dbReference type="KEGG" id="hsa:113277"/>
<dbReference type="MANE-Select" id="ENST00000612339.4">
    <property type="protein sequence ID" value="ENSP00000483246.1"/>
    <property type="RefSeq nucleotide sequence ID" value="NM_145041.4"/>
    <property type="RefSeq protein sequence ID" value="NP_659478.1"/>
</dbReference>
<dbReference type="UCSC" id="uc002idn.2">
    <molecule id="Q96A25-1"/>
    <property type="organism name" value="human"/>
</dbReference>
<dbReference type="AGR" id="HGNC:28288"/>
<dbReference type="CTD" id="113277"/>
<dbReference type="DisGeNET" id="113277"/>
<dbReference type="GeneCards" id="TMEM106A"/>
<dbReference type="HGNC" id="HGNC:28288">
    <property type="gene designation" value="TMEM106A"/>
</dbReference>
<dbReference type="HPA" id="ENSG00000184988">
    <property type="expression patterns" value="Tissue enhanced (kidney)"/>
</dbReference>
<dbReference type="neXtProt" id="NX_Q96A25"/>
<dbReference type="OpenTargets" id="ENSG00000184988"/>
<dbReference type="PharmGKB" id="PA142670755"/>
<dbReference type="VEuPathDB" id="HostDB:ENSG00000184988"/>
<dbReference type="eggNOG" id="ENOG502RY0I">
    <property type="taxonomic scope" value="Eukaryota"/>
</dbReference>
<dbReference type="GeneTree" id="ENSGT00940000161546"/>
<dbReference type="HOGENOM" id="CLU_089337_1_0_1"/>
<dbReference type="InParanoid" id="Q96A25"/>
<dbReference type="OMA" id="CSYLCHS"/>
<dbReference type="OrthoDB" id="508875at2759"/>
<dbReference type="PAN-GO" id="Q96A25">
    <property type="GO annotations" value="0 GO annotations based on evolutionary models"/>
</dbReference>
<dbReference type="PhylomeDB" id="Q96A25"/>
<dbReference type="PathwayCommons" id="Q96A25"/>
<dbReference type="SignaLink" id="Q96A25"/>
<dbReference type="BioGRID-ORCS" id="113277">
    <property type="hits" value="32 hits in 1159 CRISPR screens"/>
</dbReference>
<dbReference type="GeneWiki" id="TMEM106A"/>
<dbReference type="GenomeRNAi" id="113277"/>
<dbReference type="Pharos" id="Q96A25">
    <property type="development level" value="Tbio"/>
</dbReference>
<dbReference type="PRO" id="PR:Q96A25"/>
<dbReference type="Proteomes" id="UP000005640">
    <property type="component" value="Chromosome 17"/>
</dbReference>
<dbReference type="RNAct" id="Q96A25">
    <property type="molecule type" value="protein"/>
</dbReference>
<dbReference type="Bgee" id="ENSG00000184988">
    <property type="expression patterns" value="Expressed in buccal mucosa cell and 169 other cell types or tissues"/>
</dbReference>
<dbReference type="ExpressionAtlas" id="Q96A25">
    <property type="expression patterns" value="baseline and differential"/>
</dbReference>
<dbReference type="GO" id="GO:0005886">
    <property type="term" value="C:plasma membrane"/>
    <property type="evidence" value="ECO:0000250"/>
    <property type="project" value="UniProtKB"/>
</dbReference>
<dbReference type="GO" id="GO:0009101">
    <property type="term" value="P:glycoprotein biosynthetic process"/>
    <property type="evidence" value="ECO:0000250"/>
    <property type="project" value="UniProtKB"/>
</dbReference>
<dbReference type="GO" id="GO:0045087">
    <property type="term" value="P:innate immune response"/>
    <property type="evidence" value="ECO:0007669"/>
    <property type="project" value="UniProtKB-KW"/>
</dbReference>
<dbReference type="GO" id="GO:0042116">
    <property type="term" value="P:macrophage activation"/>
    <property type="evidence" value="ECO:0000250"/>
    <property type="project" value="UniProtKB"/>
</dbReference>
<dbReference type="GO" id="GO:0043123">
    <property type="term" value="P:positive regulation of canonical NF-kappaB signal transduction"/>
    <property type="evidence" value="ECO:0000250"/>
    <property type="project" value="UniProtKB"/>
</dbReference>
<dbReference type="GO" id="GO:0032731">
    <property type="term" value="P:positive regulation of interleukin-1 beta production"/>
    <property type="evidence" value="ECO:0000250"/>
    <property type="project" value="UniProtKB"/>
</dbReference>
<dbReference type="GO" id="GO:0032755">
    <property type="term" value="P:positive regulation of interleukin-6 production"/>
    <property type="evidence" value="ECO:0000250"/>
    <property type="project" value="UniProtKB"/>
</dbReference>
<dbReference type="GO" id="GO:0043410">
    <property type="term" value="P:positive regulation of MAPK cascade"/>
    <property type="evidence" value="ECO:0000250"/>
    <property type="project" value="UniProtKB"/>
</dbReference>
<dbReference type="GO" id="GO:0045348">
    <property type="term" value="P:positive regulation of MHC class II biosynthetic process"/>
    <property type="evidence" value="ECO:0000250"/>
    <property type="project" value="UniProtKB"/>
</dbReference>
<dbReference type="GO" id="GO:1904407">
    <property type="term" value="P:positive regulation of nitric oxide metabolic process"/>
    <property type="evidence" value="ECO:0000250"/>
    <property type="project" value="UniProtKB"/>
</dbReference>
<dbReference type="GO" id="GO:0032760">
    <property type="term" value="P:positive regulation of tumor necrosis factor production"/>
    <property type="evidence" value="ECO:0000250"/>
    <property type="project" value="UniProtKB"/>
</dbReference>
<dbReference type="Gene3D" id="6.20.20.10">
    <property type="match status" value="1"/>
</dbReference>
<dbReference type="InterPro" id="IPR009790">
    <property type="entry name" value="TMEM106"/>
</dbReference>
<dbReference type="InterPro" id="IPR048509">
    <property type="entry name" value="TMEM106_C"/>
</dbReference>
<dbReference type="InterPro" id="IPR048511">
    <property type="entry name" value="TMEM106_N"/>
</dbReference>
<dbReference type="PANTHER" id="PTHR28556:SF3">
    <property type="entry name" value="TRANSMEMBRANE PROTEIN 106A"/>
    <property type="match status" value="1"/>
</dbReference>
<dbReference type="PANTHER" id="PTHR28556">
    <property type="entry name" value="TRANSMEMBRANE PROTEIN 106B"/>
    <property type="match status" value="1"/>
</dbReference>
<dbReference type="Pfam" id="PF07092">
    <property type="entry name" value="TMEM106"/>
    <property type="match status" value="1"/>
</dbReference>
<dbReference type="Pfam" id="PF21002">
    <property type="entry name" value="TMEM106_N"/>
    <property type="match status" value="1"/>
</dbReference>
<feature type="chain" id="PRO_0000242137" description="Transmembrane protein 106A">
    <location>
        <begin position="1"/>
        <end position="262"/>
    </location>
</feature>
<feature type="transmembrane region" description="Helical" evidence="2">
    <location>
        <begin position="95"/>
        <end position="115"/>
    </location>
</feature>
<feature type="splice variant" id="VSP_056642" description="In isoform 2." evidence="5">
    <original>MGKTFSQLGSWREDENKSILSSKPAIGSKAVNYSSTGSSKSFCSCVPCE</original>
    <variation>M</variation>
    <location>
        <begin position="1"/>
        <end position="49"/>
    </location>
</feature>
<protein>
    <recommendedName>
        <fullName>Transmembrane protein 106A</fullName>
    </recommendedName>
</protein>
<gene>
    <name type="primary">TMEM106A</name>
</gene>
<reference key="1">
    <citation type="journal article" date="2004" name="Nat. Genet.">
        <title>Complete sequencing and characterization of 21,243 full-length human cDNAs.</title>
        <authorList>
            <person name="Ota T."/>
            <person name="Suzuki Y."/>
            <person name="Nishikawa T."/>
            <person name="Otsuki T."/>
            <person name="Sugiyama T."/>
            <person name="Irie R."/>
            <person name="Wakamatsu A."/>
            <person name="Hayashi K."/>
            <person name="Sato H."/>
            <person name="Nagai K."/>
            <person name="Kimura K."/>
            <person name="Makita H."/>
            <person name="Sekine M."/>
            <person name="Obayashi M."/>
            <person name="Nishi T."/>
            <person name="Shibahara T."/>
            <person name="Tanaka T."/>
            <person name="Ishii S."/>
            <person name="Yamamoto J."/>
            <person name="Saito K."/>
            <person name="Kawai Y."/>
            <person name="Isono Y."/>
            <person name="Nakamura Y."/>
            <person name="Nagahari K."/>
            <person name="Murakami K."/>
            <person name="Yasuda T."/>
            <person name="Iwayanagi T."/>
            <person name="Wagatsuma M."/>
            <person name="Shiratori A."/>
            <person name="Sudo H."/>
            <person name="Hosoiri T."/>
            <person name="Kaku Y."/>
            <person name="Kodaira H."/>
            <person name="Kondo H."/>
            <person name="Sugawara M."/>
            <person name="Takahashi M."/>
            <person name="Kanda K."/>
            <person name="Yokoi T."/>
            <person name="Furuya T."/>
            <person name="Kikkawa E."/>
            <person name="Omura Y."/>
            <person name="Abe K."/>
            <person name="Kamihara K."/>
            <person name="Katsuta N."/>
            <person name="Sato K."/>
            <person name="Tanikawa M."/>
            <person name="Yamazaki M."/>
            <person name="Ninomiya K."/>
            <person name="Ishibashi T."/>
            <person name="Yamashita H."/>
            <person name="Murakawa K."/>
            <person name="Fujimori K."/>
            <person name="Tanai H."/>
            <person name="Kimata M."/>
            <person name="Watanabe M."/>
            <person name="Hiraoka S."/>
            <person name="Chiba Y."/>
            <person name="Ishida S."/>
            <person name="Ono Y."/>
            <person name="Takiguchi S."/>
            <person name="Watanabe S."/>
            <person name="Yosida M."/>
            <person name="Hotuta T."/>
            <person name="Kusano J."/>
            <person name="Kanehori K."/>
            <person name="Takahashi-Fujii A."/>
            <person name="Hara H."/>
            <person name="Tanase T.-O."/>
            <person name="Nomura Y."/>
            <person name="Togiya S."/>
            <person name="Komai F."/>
            <person name="Hara R."/>
            <person name="Takeuchi K."/>
            <person name="Arita M."/>
            <person name="Imose N."/>
            <person name="Musashino K."/>
            <person name="Yuuki H."/>
            <person name="Oshima A."/>
            <person name="Sasaki N."/>
            <person name="Aotsuka S."/>
            <person name="Yoshikawa Y."/>
            <person name="Matsunawa H."/>
            <person name="Ichihara T."/>
            <person name="Shiohata N."/>
            <person name="Sano S."/>
            <person name="Moriya S."/>
            <person name="Momiyama H."/>
            <person name="Satoh N."/>
            <person name="Takami S."/>
            <person name="Terashima Y."/>
            <person name="Suzuki O."/>
            <person name="Nakagawa S."/>
            <person name="Senoh A."/>
            <person name="Mizoguchi H."/>
            <person name="Goto Y."/>
            <person name="Shimizu F."/>
            <person name="Wakebe H."/>
            <person name="Hishigaki H."/>
            <person name="Watanabe T."/>
            <person name="Sugiyama A."/>
            <person name="Takemoto M."/>
            <person name="Kawakami B."/>
            <person name="Yamazaki M."/>
            <person name="Watanabe K."/>
            <person name="Kumagai A."/>
            <person name="Itakura S."/>
            <person name="Fukuzumi Y."/>
            <person name="Fujimori Y."/>
            <person name="Komiyama M."/>
            <person name="Tashiro H."/>
            <person name="Tanigami A."/>
            <person name="Fujiwara T."/>
            <person name="Ono T."/>
            <person name="Yamada K."/>
            <person name="Fujii Y."/>
            <person name="Ozaki K."/>
            <person name="Hirao M."/>
            <person name="Ohmori Y."/>
            <person name="Kawabata A."/>
            <person name="Hikiji T."/>
            <person name="Kobatake N."/>
            <person name="Inagaki H."/>
            <person name="Ikema Y."/>
            <person name="Okamoto S."/>
            <person name="Okitani R."/>
            <person name="Kawakami T."/>
            <person name="Noguchi S."/>
            <person name="Itoh T."/>
            <person name="Shigeta K."/>
            <person name="Senba T."/>
            <person name="Matsumura K."/>
            <person name="Nakajima Y."/>
            <person name="Mizuno T."/>
            <person name="Morinaga M."/>
            <person name="Sasaki M."/>
            <person name="Togashi T."/>
            <person name="Oyama M."/>
            <person name="Hata H."/>
            <person name="Watanabe M."/>
            <person name="Komatsu T."/>
            <person name="Mizushima-Sugano J."/>
            <person name="Satoh T."/>
            <person name="Shirai Y."/>
            <person name="Takahashi Y."/>
            <person name="Nakagawa K."/>
            <person name="Okumura K."/>
            <person name="Nagase T."/>
            <person name="Nomura N."/>
            <person name="Kikuchi H."/>
            <person name="Masuho Y."/>
            <person name="Yamashita R."/>
            <person name="Nakai K."/>
            <person name="Yada T."/>
            <person name="Nakamura Y."/>
            <person name="Ohara O."/>
            <person name="Isogai T."/>
            <person name="Sugano S."/>
        </authorList>
    </citation>
    <scope>NUCLEOTIDE SEQUENCE [LARGE SCALE MRNA] (ISOFORMS 1 AND 2)</scope>
    <source>
        <tissue>Umbilical cord blood</tissue>
    </source>
</reference>
<reference key="2">
    <citation type="journal article" date="2006" name="Nature">
        <title>DNA sequence of human chromosome 17 and analysis of rearrangement in the human lineage.</title>
        <authorList>
            <person name="Zody M.C."/>
            <person name="Garber M."/>
            <person name="Adams D.J."/>
            <person name="Sharpe T."/>
            <person name="Harrow J."/>
            <person name="Lupski J.R."/>
            <person name="Nicholson C."/>
            <person name="Searle S.M."/>
            <person name="Wilming L."/>
            <person name="Young S.K."/>
            <person name="Abouelleil A."/>
            <person name="Allen N.R."/>
            <person name="Bi W."/>
            <person name="Bloom T."/>
            <person name="Borowsky M.L."/>
            <person name="Bugalter B.E."/>
            <person name="Butler J."/>
            <person name="Chang J.L."/>
            <person name="Chen C.-K."/>
            <person name="Cook A."/>
            <person name="Corum B."/>
            <person name="Cuomo C.A."/>
            <person name="de Jong P.J."/>
            <person name="DeCaprio D."/>
            <person name="Dewar K."/>
            <person name="FitzGerald M."/>
            <person name="Gilbert J."/>
            <person name="Gibson R."/>
            <person name="Gnerre S."/>
            <person name="Goldstein S."/>
            <person name="Grafham D.V."/>
            <person name="Grocock R."/>
            <person name="Hafez N."/>
            <person name="Hagopian D.S."/>
            <person name="Hart E."/>
            <person name="Norman C.H."/>
            <person name="Humphray S."/>
            <person name="Jaffe D.B."/>
            <person name="Jones M."/>
            <person name="Kamal M."/>
            <person name="Khodiyar V.K."/>
            <person name="LaButti K."/>
            <person name="Laird G."/>
            <person name="Lehoczky J."/>
            <person name="Liu X."/>
            <person name="Lokyitsang T."/>
            <person name="Loveland J."/>
            <person name="Lui A."/>
            <person name="Macdonald P."/>
            <person name="Major J.E."/>
            <person name="Matthews L."/>
            <person name="Mauceli E."/>
            <person name="McCarroll S.A."/>
            <person name="Mihalev A.H."/>
            <person name="Mudge J."/>
            <person name="Nguyen C."/>
            <person name="Nicol R."/>
            <person name="O'Leary S.B."/>
            <person name="Osoegawa K."/>
            <person name="Schwartz D.C."/>
            <person name="Shaw-Smith C."/>
            <person name="Stankiewicz P."/>
            <person name="Steward C."/>
            <person name="Swarbreck D."/>
            <person name="Venkataraman V."/>
            <person name="Whittaker C.A."/>
            <person name="Yang X."/>
            <person name="Zimmer A.R."/>
            <person name="Bradley A."/>
            <person name="Hubbard T."/>
            <person name="Birren B.W."/>
            <person name="Rogers J."/>
            <person name="Lander E.S."/>
            <person name="Nusbaum C."/>
        </authorList>
    </citation>
    <scope>NUCLEOTIDE SEQUENCE [LARGE SCALE GENOMIC DNA]</scope>
</reference>
<reference key="3">
    <citation type="submission" date="2005-07" db="EMBL/GenBank/DDBJ databases">
        <authorList>
            <person name="Mural R.J."/>
            <person name="Istrail S."/>
            <person name="Sutton G."/>
            <person name="Florea L."/>
            <person name="Halpern A.L."/>
            <person name="Mobarry C.M."/>
            <person name="Lippert R."/>
            <person name="Walenz B."/>
            <person name="Shatkay H."/>
            <person name="Dew I."/>
            <person name="Miller J.R."/>
            <person name="Flanigan M.J."/>
            <person name="Edwards N.J."/>
            <person name="Bolanos R."/>
            <person name="Fasulo D."/>
            <person name="Halldorsson B.V."/>
            <person name="Hannenhalli S."/>
            <person name="Turner R."/>
            <person name="Yooseph S."/>
            <person name="Lu F."/>
            <person name="Nusskern D.R."/>
            <person name="Shue B.C."/>
            <person name="Zheng X.H."/>
            <person name="Zhong F."/>
            <person name="Delcher A.L."/>
            <person name="Huson D.H."/>
            <person name="Kravitz S.A."/>
            <person name="Mouchard L."/>
            <person name="Reinert K."/>
            <person name="Remington K.A."/>
            <person name="Clark A.G."/>
            <person name="Waterman M.S."/>
            <person name="Eichler E.E."/>
            <person name="Adams M.D."/>
            <person name="Hunkapiller M.W."/>
            <person name="Myers E.W."/>
            <person name="Venter J.C."/>
        </authorList>
    </citation>
    <scope>NUCLEOTIDE SEQUENCE [LARGE SCALE GENOMIC DNA]</scope>
</reference>
<reference key="4">
    <citation type="journal article" date="2004" name="Genome Res.">
        <title>The status, quality, and expansion of the NIH full-length cDNA project: the Mammalian Gene Collection (MGC).</title>
        <authorList>
            <consortium name="The MGC Project Team"/>
        </authorList>
    </citation>
    <scope>NUCLEOTIDE SEQUENCE [LARGE SCALE MRNA] (ISOFORM 1)</scope>
    <source>
        <tissue>Kidney</tissue>
        <tissue>Testis</tissue>
    </source>
</reference>
<reference key="5">
    <citation type="journal article" date="2017" name="Kidney Blood Press. Res.">
        <title>TMEM106a is a Novel Tumor Suppressor in Human Renal Cancer.</title>
        <authorList>
            <person name="Wu C."/>
            <person name="Xu J."/>
            <person name="Wang H."/>
            <person name="Zhang J."/>
            <person name="Zhong J."/>
            <person name="Zou X."/>
            <person name="Chen Y."/>
            <person name="Yang G."/>
            <person name="Zhong Y."/>
            <person name="Lai D."/>
            <person name="Li X."/>
            <person name="Tang A."/>
        </authorList>
    </citation>
    <scope>FUNCTION</scope>
    <scope>TISSUE SPECIFICITY</scope>
</reference>
<reference key="6">
    <citation type="journal article" date="2018" name="J. Cell. Biochem.">
        <title>TMEM106A inhibits cell proliferation, migration, and induces apoptosis of lung cancer cells.</title>
        <authorList>
            <person name="Liu J."/>
            <person name="Zhu H."/>
        </authorList>
    </citation>
    <scope>FUNCTION</scope>
    <scope>TISSUE SPECIFICITY</scope>
</reference>
<keyword id="KW-0025">Alternative splicing</keyword>
<keyword id="KW-1003">Cell membrane</keyword>
<keyword id="KW-0391">Immunity</keyword>
<keyword id="KW-0399">Innate immunity</keyword>
<keyword id="KW-0472">Membrane</keyword>
<keyword id="KW-1267">Proteomics identification</keyword>
<keyword id="KW-1185">Reference proteome</keyword>
<keyword id="KW-0812">Transmembrane</keyword>
<keyword id="KW-1133">Transmembrane helix</keyword>
<comment type="function">
    <text evidence="1 3 4">Activates macrophages and polarizes them into M1-like macrophages through the activation of the MAPK and NF-kappaB signaling pathway. Upon activation, up-regulates the expression of CD80, CD86, CD69 and MHC II on macrophages, and induces the release of pro-inflammatory cytokines such as TNF, IL1B, IL6, CCL2 and nitric oxide (By similarity). May play a role in inhibition of proliferation and migration (PubMed:29131025, PubMed:30456879).</text>
</comment>
<comment type="interaction">
    <interactant intactId="EBI-3915978">
        <id>Q96A25</id>
    </interactant>
    <interactant intactId="EBI-12279764">
        <id>O75355-2</id>
        <label>ENTPD3</label>
    </interactant>
    <organismsDiffer>false</organismsDiffer>
    <experiments>3</experiments>
</comment>
<comment type="interaction">
    <interactant intactId="EBI-3915978">
        <id>Q96A25</id>
    </interactant>
    <interactant intactId="EBI-711490">
        <id>Q9UKR5</id>
        <label>ERG28</label>
    </interactant>
    <organismsDiffer>false</organismsDiffer>
    <experiments>3</experiments>
</comment>
<comment type="interaction">
    <interactant intactId="EBI-3915978">
        <id>Q96A25</id>
    </interactant>
    <interactant intactId="EBI-3905204">
        <id>P29033</id>
        <label>GJB2</label>
    </interactant>
    <organismsDiffer>false</organismsDiffer>
    <experiments>3</experiments>
</comment>
<comment type="interaction">
    <interactant intactId="EBI-3915978">
        <id>Q96A25</id>
    </interactant>
    <interactant intactId="EBI-4401517">
        <id>O14653</id>
        <label>GOSR2</label>
    </interactant>
    <organismsDiffer>false</organismsDiffer>
    <experiments>3</experiments>
</comment>
<comment type="interaction">
    <interactant intactId="EBI-3915978">
        <id>Q96A25</id>
    </interactant>
    <interactant intactId="EBI-720480">
        <id>P24593</id>
        <label>IGFBP5</label>
    </interactant>
    <organismsDiffer>false</organismsDiffer>
    <experiments>3</experiments>
</comment>
<comment type="interaction">
    <interactant intactId="EBI-3915978">
        <id>Q96A25</id>
    </interactant>
    <interactant intactId="EBI-2821497">
        <id>Q9BVX2</id>
        <label>TMEM106C</label>
    </interactant>
    <organismsDiffer>false</organismsDiffer>
    <experiments>5</experiments>
</comment>
<comment type="interaction">
    <interactant intactId="EBI-3915978">
        <id>Q96A25</id>
    </interactant>
    <interactant intactId="EBI-12845616">
        <id>Q6UX40</id>
        <label>TMEM107</label>
    </interactant>
    <organismsDiffer>false</organismsDiffer>
    <experiments>3</experiments>
</comment>
<comment type="interaction">
    <interactant intactId="EBI-3915978">
        <id>Q96A25</id>
    </interactant>
    <interactant intactId="EBI-10694905">
        <id>Q5BJH2-2</id>
        <label>TMEM128</label>
    </interactant>
    <organismsDiffer>false</organismsDiffer>
    <experiments>3</experiments>
</comment>
<comment type="interaction">
    <interactant intactId="EBI-3915978">
        <id>Q96A25</id>
    </interactant>
    <interactant intactId="EBI-2548832">
        <id>Q8N661</id>
        <label>TMEM86B</label>
    </interactant>
    <organismsDiffer>false</organismsDiffer>
    <experiments>3</experiments>
</comment>
<comment type="interaction">
    <interactant intactId="EBI-3915978">
        <id>Q96A25</id>
    </interactant>
    <interactant intactId="EBI-12003398">
        <id>Q9H2S6-2</id>
        <label>TNMD</label>
    </interactant>
    <organismsDiffer>false</organismsDiffer>
    <experiments>3</experiments>
</comment>
<comment type="interaction">
    <interactant intactId="EBI-3915978">
        <id>Q96A25</id>
    </interactant>
    <interactant intactId="EBI-8652667">
        <id>O14817</id>
        <label>TSPAN4</label>
    </interactant>
    <organismsDiffer>false</organismsDiffer>
    <experiments>3</experiments>
</comment>
<comment type="subcellular location">
    <subcellularLocation>
        <location evidence="1">Cell membrane</location>
        <topology evidence="2">Single-pass membrane protein</topology>
    </subcellularLocation>
</comment>
<comment type="alternative products">
    <event type="alternative splicing"/>
    <isoform>
        <id>Q96A25-1</id>
        <name>1</name>
        <sequence type="displayed"/>
    </isoform>
    <isoform>
        <id>Q96A25-2</id>
        <name>2</name>
        <sequence type="described" ref="VSP_056642"/>
    </isoform>
</comment>
<comment type="tissue specificity">
    <text evidence="3 4">Expressed in renal cells (at protein level) (PubMed:29131025). Expressed in epithelial cells (PubMed:30456879).</text>
</comment>
<comment type="similarity">
    <text evidence="6">Belongs to the TMEM106 family.</text>
</comment>
<organism>
    <name type="scientific">Homo sapiens</name>
    <name type="common">Human</name>
    <dbReference type="NCBI Taxonomy" id="9606"/>
    <lineage>
        <taxon>Eukaryota</taxon>
        <taxon>Metazoa</taxon>
        <taxon>Chordata</taxon>
        <taxon>Craniata</taxon>
        <taxon>Vertebrata</taxon>
        <taxon>Euteleostomi</taxon>
        <taxon>Mammalia</taxon>
        <taxon>Eutheria</taxon>
        <taxon>Euarchontoglires</taxon>
        <taxon>Primates</taxon>
        <taxon>Haplorrhini</taxon>
        <taxon>Catarrhini</taxon>
        <taxon>Hominidae</taxon>
        <taxon>Homo</taxon>
    </lineage>
</organism>